<dbReference type="EC" id="6.5.1.8" evidence="1"/>
<dbReference type="EMBL" id="DS985241">
    <property type="protein sequence ID" value="EDV29731.1"/>
    <property type="molecule type" value="Genomic_DNA"/>
</dbReference>
<dbReference type="RefSeq" id="XP_002108933.1">
    <property type="nucleotide sequence ID" value="XM_002108897.1"/>
</dbReference>
<dbReference type="SMR" id="B3RID0"/>
<dbReference type="FunCoup" id="B3RID0">
    <property type="interactions" value="1639"/>
</dbReference>
<dbReference type="STRING" id="10228.B3RID0"/>
<dbReference type="EnsemblMetazoa" id="TriadT18395">
    <property type="protein sequence ID" value="TriadP18395"/>
    <property type="gene ID" value="TriadG18395"/>
</dbReference>
<dbReference type="GeneID" id="6750147"/>
<dbReference type="KEGG" id="tad:TRIADDRAFT_18395"/>
<dbReference type="CTD" id="6750147"/>
<dbReference type="eggNOG" id="KOG3833">
    <property type="taxonomic scope" value="Eukaryota"/>
</dbReference>
<dbReference type="HOGENOM" id="CLU_022279_0_0_1"/>
<dbReference type="InParanoid" id="B3RID0"/>
<dbReference type="OMA" id="QTRGVEC"/>
<dbReference type="OrthoDB" id="10249697at2759"/>
<dbReference type="PhylomeDB" id="B3RID0"/>
<dbReference type="Proteomes" id="UP000009022">
    <property type="component" value="Unassembled WGS sequence"/>
</dbReference>
<dbReference type="GO" id="GO:0005634">
    <property type="term" value="C:nucleus"/>
    <property type="evidence" value="ECO:0000318"/>
    <property type="project" value="GO_Central"/>
</dbReference>
<dbReference type="GO" id="GO:0072669">
    <property type="term" value="C:tRNA-splicing ligase complex"/>
    <property type="evidence" value="ECO:0000318"/>
    <property type="project" value="GO_Central"/>
</dbReference>
<dbReference type="GO" id="GO:0005525">
    <property type="term" value="F:GTP binding"/>
    <property type="evidence" value="ECO:0007669"/>
    <property type="project" value="UniProtKB-KW"/>
</dbReference>
<dbReference type="GO" id="GO:0046872">
    <property type="term" value="F:metal ion binding"/>
    <property type="evidence" value="ECO:0007669"/>
    <property type="project" value="UniProtKB-KW"/>
</dbReference>
<dbReference type="GO" id="GO:0170057">
    <property type="term" value="F:RNA ligase (GTP) activity"/>
    <property type="evidence" value="ECO:0007669"/>
    <property type="project" value="UniProtKB-EC"/>
</dbReference>
<dbReference type="GO" id="GO:0006388">
    <property type="term" value="P:tRNA splicing, via endonucleolytic cleavage and ligation"/>
    <property type="evidence" value="ECO:0000318"/>
    <property type="project" value="GO_Central"/>
</dbReference>
<dbReference type="FunFam" id="3.90.1860.10:FF:000001">
    <property type="entry name" value="tRNA-splicing ligase RtcB homolog"/>
    <property type="match status" value="1"/>
</dbReference>
<dbReference type="Gene3D" id="3.90.1860.10">
    <property type="entry name" value="tRNA-splicing ligase RtcB"/>
    <property type="match status" value="1"/>
</dbReference>
<dbReference type="HAMAP" id="MF_03144">
    <property type="entry name" value="RtcB_euk"/>
    <property type="match status" value="1"/>
</dbReference>
<dbReference type="InterPro" id="IPR001233">
    <property type="entry name" value="RtcB"/>
</dbReference>
<dbReference type="InterPro" id="IPR036025">
    <property type="entry name" value="RtcB-like_sf"/>
</dbReference>
<dbReference type="InterPro" id="IPR027513">
    <property type="entry name" value="RtcB_euk"/>
</dbReference>
<dbReference type="PANTHER" id="PTHR11118">
    <property type="entry name" value="RNA-SPLICING LIGASE RTCB HOMOLOG"/>
    <property type="match status" value="1"/>
</dbReference>
<dbReference type="PANTHER" id="PTHR11118:SF1">
    <property type="entry name" value="RNA-SPLICING LIGASE RTCB HOMOLOG"/>
    <property type="match status" value="1"/>
</dbReference>
<dbReference type="Pfam" id="PF01139">
    <property type="entry name" value="RtcB"/>
    <property type="match status" value="1"/>
</dbReference>
<dbReference type="SUPFAM" id="SSF103365">
    <property type="entry name" value="Hypothetical protein PH1602"/>
    <property type="match status" value="1"/>
</dbReference>
<dbReference type="PROSITE" id="PS01288">
    <property type="entry name" value="UPF0027"/>
    <property type="match status" value="1"/>
</dbReference>
<organism>
    <name type="scientific">Trichoplax adhaerens</name>
    <name type="common">Trichoplax reptans</name>
    <dbReference type="NCBI Taxonomy" id="10228"/>
    <lineage>
        <taxon>Eukaryota</taxon>
        <taxon>Metazoa</taxon>
        <taxon>Placozoa</taxon>
        <taxon>Uniplacotomia</taxon>
        <taxon>Trichoplacea</taxon>
        <taxon>Trichoplacidae</taxon>
        <taxon>Trichoplax</taxon>
    </lineage>
</organism>
<proteinExistence type="inferred from homology"/>
<evidence type="ECO:0000255" key="1">
    <source>
        <dbReference type="HAMAP-Rule" id="MF_03144"/>
    </source>
</evidence>
<gene>
    <name type="ORF">TRIADDRAFT_18395</name>
</gene>
<keyword id="KW-0342">GTP-binding</keyword>
<keyword id="KW-0436">Ligase</keyword>
<keyword id="KW-0464">Manganese</keyword>
<keyword id="KW-0479">Metal-binding</keyword>
<keyword id="KW-0547">Nucleotide-binding</keyword>
<keyword id="KW-1185">Reference proteome</keyword>
<keyword id="KW-0819">tRNA processing</keyword>
<name>RTCB_TRIAD</name>
<protein>
    <recommendedName>
        <fullName evidence="1">RNA-splicing ligase RtcB homolog</fullName>
        <ecNumber evidence="1">6.5.1.8</ecNumber>
    </recommendedName>
    <alternativeName>
        <fullName evidence="1">3'-phosphate/5'-hydroxy nucleic acid ligase</fullName>
    </alternativeName>
</protein>
<reference key="1">
    <citation type="journal article" date="2008" name="Nature">
        <title>The Trichoplax genome and the nature of placozoans.</title>
        <authorList>
            <person name="Srivastava M."/>
            <person name="Begovic E."/>
            <person name="Chapman J."/>
            <person name="Putnam N.H."/>
            <person name="Hellsten U."/>
            <person name="Kawashima T."/>
            <person name="Kuo A."/>
            <person name="Mitros T."/>
            <person name="Salamov A."/>
            <person name="Carpenter M.L."/>
            <person name="Signorovitch A.Y."/>
            <person name="Moreno M.A."/>
            <person name="Kamm K."/>
            <person name="Grimwood J."/>
            <person name="Schmutz J."/>
            <person name="Shapiro H."/>
            <person name="Grigoriev I.V."/>
            <person name="Buss L.W."/>
            <person name="Schierwater B."/>
            <person name="Dellaporta S.L."/>
            <person name="Rokhsar D.S."/>
        </authorList>
    </citation>
    <scope>NUCLEOTIDE SEQUENCE [LARGE SCALE GENOMIC DNA]</scope>
    <source>
        <strain>Grell-BS-1999</strain>
    </source>
</reference>
<feature type="chain" id="PRO_0000407246" description="RNA-splicing ligase RtcB homolog">
    <location>
        <begin position="1"/>
        <end position="510"/>
    </location>
</feature>
<feature type="active site" description="GMP-histidine intermediate" evidence="1">
    <location>
        <position position="433"/>
    </location>
</feature>
<feature type="binding site" evidence="1">
    <location>
        <position position="124"/>
    </location>
    <ligand>
        <name>Mn(2+)</name>
        <dbReference type="ChEBI" id="CHEBI:29035"/>
        <label>1</label>
    </ligand>
</feature>
<feature type="binding site" evidence="1">
    <location>
        <position position="127"/>
    </location>
    <ligand>
        <name>Mn(2+)</name>
        <dbReference type="ChEBI" id="CHEBI:29035"/>
        <label>1</label>
    </ligand>
</feature>
<feature type="binding site" evidence="1">
    <location>
        <position position="127"/>
    </location>
    <ligand>
        <name>Mn(2+)</name>
        <dbReference type="ChEBI" id="CHEBI:29035"/>
        <label>2</label>
    </ligand>
</feature>
<feature type="binding site" evidence="1">
    <location>
        <begin position="231"/>
        <end position="235"/>
    </location>
    <ligand>
        <name>GMP</name>
        <dbReference type="ChEBI" id="CHEBI:58115"/>
    </ligand>
</feature>
<feature type="binding site" evidence="1">
    <location>
        <position position="232"/>
    </location>
    <ligand>
        <name>Mn(2+)</name>
        <dbReference type="ChEBI" id="CHEBI:29035"/>
        <label>1</label>
    </ligand>
</feature>
<feature type="binding site" evidence="1">
    <location>
        <position position="264"/>
    </location>
    <ligand>
        <name>Mn(2+)</name>
        <dbReference type="ChEBI" id="CHEBI:29035"/>
        <label>2</label>
    </ligand>
</feature>
<feature type="binding site" evidence="1">
    <location>
        <begin position="358"/>
        <end position="359"/>
    </location>
    <ligand>
        <name>GMP</name>
        <dbReference type="ChEBI" id="CHEBI:58115"/>
    </ligand>
</feature>
<feature type="binding site" evidence="1">
    <location>
        <position position="358"/>
    </location>
    <ligand>
        <name>Mn(2+)</name>
        <dbReference type="ChEBI" id="CHEBI:29035"/>
        <label>2</label>
    </ligand>
</feature>
<feature type="binding site" evidence="1">
    <location>
        <begin position="407"/>
        <end position="410"/>
    </location>
    <ligand>
        <name>GMP</name>
        <dbReference type="ChEBI" id="CHEBI:58115"/>
    </ligand>
</feature>
<feature type="binding site" evidence="1">
    <location>
        <position position="414"/>
    </location>
    <ligand>
        <name>GMP</name>
        <dbReference type="ChEBI" id="CHEBI:58115"/>
    </ligand>
</feature>
<feature type="binding site" evidence="1">
    <location>
        <begin position="433"/>
        <end position="436"/>
    </location>
    <ligand>
        <name>GMP</name>
        <dbReference type="ChEBI" id="CHEBI:58115"/>
    </ligand>
</feature>
<feature type="binding site" evidence="1">
    <location>
        <position position="509"/>
    </location>
    <ligand>
        <name>GMP</name>
        <dbReference type="ChEBI" id="CHEBI:58115"/>
    </ligand>
</feature>
<comment type="function">
    <text evidence="1">Catalytic subunit of the tRNA-splicing ligase complex that acts by directly joining spliced tRNA halves to mature-sized tRNAs by incorporating the precursor-derived splice junction phosphate into the mature tRNA as a canonical 3',5'-phosphodiester. May act as an RNA ligase with broad substrate specificity, and may function toward other RNAs.</text>
</comment>
<comment type="catalytic activity">
    <reaction evidence="1">
        <text>a 3'-end 3'-phospho-ribonucleotide-RNA + a 5'-end dephospho-ribonucleoside-RNA + GTP = a ribonucleotidyl-ribonucleotide-RNA + GMP + diphosphate</text>
        <dbReference type="Rhea" id="RHEA:68076"/>
        <dbReference type="Rhea" id="RHEA-COMP:10463"/>
        <dbReference type="Rhea" id="RHEA-COMP:13936"/>
        <dbReference type="Rhea" id="RHEA-COMP:17355"/>
        <dbReference type="ChEBI" id="CHEBI:33019"/>
        <dbReference type="ChEBI" id="CHEBI:37565"/>
        <dbReference type="ChEBI" id="CHEBI:58115"/>
        <dbReference type="ChEBI" id="CHEBI:83062"/>
        <dbReference type="ChEBI" id="CHEBI:138284"/>
        <dbReference type="ChEBI" id="CHEBI:173118"/>
        <dbReference type="EC" id="6.5.1.8"/>
    </reaction>
</comment>
<comment type="catalytic activity">
    <reaction evidence="1">
        <text>a 3'-end 2',3'-cyclophospho-ribonucleotide-RNA + a 5'-end dephospho-ribonucleoside-RNA + GTP + H2O = a ribonucleotidyl-ribonucleotide-RNA + GMP + diphosphate + H(+)</text>
        <dbReference type="Rhea" id="RHEA:68080"/>
        <dbReference type="Rhea" id="RHEA-COMP:10464"/>
        <dbReference type="Rhea" id="RHEA-COMP:13936"/>
        <dbReference type="Rhea" id="RHEA-COMP:17355"/>
        <dbReference type="ChEBI" id="CHEBI:15377"/>
        <dbReference type="ChEBI" id="CHEBI:15378"/>
        <dbReference type="ChEBI" id="CHEBI:33019"/>
        <dbReference type="ChEBI" id="CHEBI:37565"/>
        <dbReference type="ChEBI" id="CHEBI:58115"/>
        <dbReference type="ChEBI" id="CHEBI:83064"/>
        <dbReference type="ChEBI" id="CHEBI:138284"/>
        <dbReference type="ChEBI" id="CHEBI:173118"/>
        <dbReference type="EC" id="6.5.1.8"/>
    </reaction>
</comment>
<comment type="cofactor">
    <cofactor evidence="1">
        <name>Mn(2+)</name>
        <dbReference type="ChEBI" id="CHEBI:29035"/>
    </cofactor>
    <text evidence="1">Binds 2 manganese ions per subunit.</text>
</comment>
<comment type="subunit">
    <text evidence="1">Catalytic component of the tRNA-splicing ligase complex.</text>
</comment>
<comment type="miscellaneous">
    <text evidence="1">Ligation probably proceeds through 3 nucleotidyl transfer steps, with 2',3'-cyclic phosphate termini being hydrolyzed to 3'-P termini in a step that precedes 3'-P activation with GMP. In the first nucleotidyl transfer step, RTCB reacts with GTP to form a covalent RTCB-histidine-GMP intermediate with release of PPi; in the second step, the GMP moiety is transferred to the RNA 3'-P; in the third step, the 5'-OH from the opposite RNA strand attacks the activated 3'-P to form a 3',5'-phosphodiester bond and release GMP.</text>
</comment>
<comment type="similarity">
    <text evidence="1">Belongs to the RtcB family.</text>
</comment>
<sequence>MERLNRNRSYQEELNFIEKINDYSYRIKLGFVPNMKVEGLFYADLPLEHLMFEELQHFCSCNGVGGFLPGVKQIGNVAALPGIVGKSIGLPDIHSGYGFAIGNIAAFDVANPKAIVSPGGVGFDINCGVRLIRTNLHERDVNPMKETLAQSLFDHIPVGVGSRGIIPMNARDLDEALEMGMDWSLREGYAWAEDKEHCEEYGRMLQADSNKISLRAKKRGLPQLGTLGAGNHYAEIQAVDEIYDSFAAKSMGINRRGQICIMVHSGSRGLGHQVATDALFNMEKAMIKDGINVNDRQLACARIASDEGQNYLKGMAAAANYAWVNRSSMTFLARQAFAKCFHTTPDDLDMHVIYDVSHNIAKIEEHVVNGKLSTLLVHRKGSTRAFPPHHPLIPVDYQLTGQPVLIGGTMGTCSFVMTGTSQGMSETYGTTCHGAGRALSRAKARRSLNYQEVLDRLNASGISIRVASPKLVMEEAPESYKDVTNVVETCHLAGISKKCFKLRPIAVIKG</sequence>
<accession>B3RID0</accession>